<protein>
    <recommendedName>
        <fullName evidence="2">Ribosome-releasing factor 2, mitochondrial</fullName>
        <shortName evidence="2">RRF2mt</shortName>
    </recommendedName>
    <alternativeName>
        <fullName evidence="2">Elongation factor G 2, mitochondrial</fullName>
        <shortName evidence="2">EF-G2mt</shortName>
        <shortName evidence="2">mEF-G 2</shortName>
    </alternativeName>
</protein>
<proteinExistence type="inferred from homology"/>
<evidence type="ECO:0000250" key="1">
    <source>
        <dbReference type="UniProtKB" id="Q9VCX4"/>
    </source>
</evidence>
<evidence type="ECO:0000255" key="2">
    <source>
        <dbReference type="HAMAP-Rule" id="MF_03059"/>
    </source>
</evidence>
<keyword id="KW-0342">GTP-binding</keyword>
<keyword id="KW-0496">Mitochondrion</keyword>
<keyword id="KW-0547">Nucleotide-binding</keyword>
<keyword id="KW-0648">Protein biosynthesis</keyword>
<keyword id="KW-1185">Reference proteome</keyword>
<keyword id="KW-0809">Transit peptide</keyword>
<name>RRF2M_DROVI</name>
<dbReference type="EMBL" id="CH940652">
    <property type="protein sequence ID" value="EDW59377.1"/>
    <property type="molecule type" value="Genomic_DNA"/>
</dbReference>
<dbReference type="RefSeq" id="XP_002056265.2">
    <property type="nucleotide sequence ID" value="XM_002056229.2"/>
</dbReference>
<dbReference type="SMR" id="B4M416"/>
<dbReference type="FunCoup" id="B4M416">
    <property type="interactions" value="485"/>
</dbReference>
<dbReference type="STRING" id="7244.B4M416"/>
<dbReference type="GeneID" id="6633042"/>
<dbReference type="KEGG" id="dvi:6633042"/>
<dbReference type="CTD" id="42670"/>
<dbReference type="eggNOG" id="KOG0464">
    <property type="taxonomic scope" value="Eukaryota"/>
</dbReference>
<dbReference type="HOGENOM" id="CLU_002794_4_1_1"/>
<dbReference type="InParanoid" id="B4M416"/>
<dbReference type="OMA" id="GPQFTFP"/>
<dbReference type="OrthoDB" id="198619at2759"/>
<dbReference type="PhylomeDB" id="B4M416"/>
<dbReference type="Proteomes" id="UP000008792">
    <property type="component" value="Unassembled WGS sequence"/>
</dbReference>
<dbReference type="GO" id="GO:0005739">
    <property type="term" value="C:mitochondrion"/>
    <property type="evidence" value="ECO:0007669"/>
    <property type="project" value="UniProtKB-SubCell"/>
</dbReference>
<dbReference type="GO" id="GO:0005525">
    <property type="term" value="F:GTP binding"/>
    <property type="evidence" value="ECO:0007669"/>
    <property type="project" value="UniProtKB-UniRule"/>
</dbReference>
<dbReference type="GO" id="GO:0003924">
    <property type="term" value="F:GTPase activity"/>
    <property type="evidence" value="ECO:0000250"/>
    <property type="project" value="UniProtKB"/>
</dbReference>
<dbReference type="GO" id="GO:0032543">
    <property type="term" value="P:mitochondrial translation"/>
    <property type="evidence" value="ECO:0000250"/>
    <property type="project" value="UniProtKB"/>
</dbReference>
<dbReference type="GO" id="GO:0032790">
    <property type="term" value="P:ribosome disassembly"/>
    <property type="evidence" value="ECO:0000250"/>
    <property type="project" value="UniProtKB"/>
</dbReference>
<dbReference type="CDD" id="cd16262">
    <property type="entry name" value="EFG_III"/>
    <property type="match status" value="1"/>
</dbReference>
<dbReference type="CDD" id="cd03713">
    <property type="entry name" value="EFG_mtEFG_C"/>
    <property type="match status" value="1"/>
</dbReference>
<dbReference type="FunFam" id="3.30.70.240:FF:000001">
    <property type="entry name" value="Elongation factor G"/>
    <property type="match status" value="1"/>
</dbReference>
<dbReference type="FunFam" id="2.40.30.10:FF:000377">
    <property type="entry name" value="Ribosome-releasing factor 2, mitochondrial"/>
    <property type="match status" value="1"/>
</dbReference>
<dbReference type="FunFam" id="3.30.230.10:FF:000033">
    <property type="entry name" value="Ribosome-releasing factor 2, mitochondrial"/>
    <property type="match status" value="1"/>
</dbReference>
<dbReference type="FunFam" id="3.30.70.870:FF:000005">
    <property type="entry name" value="Ribosome-releasing factor 2, mitochondrial"/>
    <property type="match status" value="1"/>
</dbReference>
<dbReference type="FunFam" id="3.40.50.300:FF:000514">
    <property type="entry name" value="Ribosome-releasing factor 2, mitochondrial"/>
    <property type="match status" value="1"/>
</dbReference>
<dbReference type="Gene3D" id="3.30.230.10">
    <property type="match status" value="1"/>
</dbReference>
<dbReference type="Gene3D" id="3.30.70.240">
    <property type="match status" value="1"/>
</dbReference>
<dbReference type="Gene3D" id="3.30.70.870">
    <property type="entry name" value="Elongation Factor G (Translational Gtpase), domain 3"/>
    <property type="match status" value="1"/>
</dbReference>
<dbReference type="Gene3D" id="3.40.50.300">
    <property type="entry name" value="P-loop containing nucleotide triphosphate hydrolases"/>
    <property type="match status" value="1"/>
</dbReference>
<dbReference type="Gene3D" id="2.40.30.10">
    <property type="entry name" value="Translation factors"/>
    <property type="match status" value="1"/>
</dbReference>
<dbReference type="HAMAP" id="MF_03059">
    <property type="entry name" value="mEF_G_2"/>
    <property type="match status" value="1"/>
</dbReference>
<dbReference type="InterPro" id="IPR030851">
    <property type="entry name" value="EFG2"/>
</dbReference>
<dbReference type="InterPro" id="IPR041095">
    <property type="entry name" value="EFG_II"/>
</dbReference>
<dbReference type="InterPro" id="IPR009022">
    <property type="entry name" value="EFG_III"/>
</dbReference>
<dbReference type="InterPro" id="IPR035647">
    <property type="entry name" value="EFG_III/V"/>
</dbReference>
<dbReference type="InterPro" id="IPR035649">
    <property type="entry name" value="EFG_V"/>
</dbReference>
<dbReference type="InterPro" id="IPR000640">
    <property type="entry name" value="EFG_V-like"/>
</dbReference>
<dbReference type="InterPro" id="IPR031157">
    <property type="entry name" value="G_TR_CS"/>
</dbReference>
<dbReference type="InterPro" id="IPR027417">
    <property type="entry name" value="P-loop_NTPase"/>
</dbReference>
<dbReference type="InterPro" id="IPR020568">
    <property type="entry name" value="Ribosomal_Su5_D2-typ_SF"/>
</dbReference>
<dbReference type="InterPro" id="IPR014721">
    <property type="entry name" value="Ribsml_uS5_D2-typ_fold_subgr"/>
</dbReference>
<dbReference type="InterPro" id="IPR005225">
    <property type="entry name" value="Small_GTP-bd"/>
</dbReference>
<dbReference type="InterPro" id="IPR000795">
    <property type="entry name" value="T_Tr_GTP-bd_dom"/>
</dbReference>
<dbReference type="InterPro" id="IPR009000">
    <property type="entry name" value="Transl_B-barrel_sf"/>
</dbReference>
<dbReference type="NCBIfam" id="TIGR00231">
    <property type="entry name" value="small_GTP"/>
    <property type="match status" value="1"/>
</dbReference>
<dbReference type="PANTHER" id="PTHR43261:SF1">
    <property type="entry name" value="RIBOSOME-RELEASING FACTOR 2, MITOCHONDRIAL"/>
    <property type="match status" value="1"/>
</dbReference>
<dbReference type="PANTHER" id="PTHR43261">
    <property type="entry name" value="TRANSLATION ELONGATION FACTOR G-RELATED"/>
    <property type="match status" value="1"/>
</dbReference>
<dbReference type="Pfam" id="PF00679">
    <property type="entry name" value="EFG_C"/>
    <property type="match status" value="1"/>
</dbReference>
<dbReference type="Pfam" id="PF14492">
    <property type="entry name" value="EFG_III"/>
    <property type="match status" value="1"/>
</dbReference>
<dbReference type="Pfam" id="PF00009">
    <property type="entry name" value="GTP_EFTU"/>
    <property type="match status" value="1"/>
</dbReference>
<dbReference type="PRINTS" id="PR00315">
    <property type="entry name" value="ELONGATNFCT"/>
</dbReference>
<dbReference type="SMART" id="SM00838">
    <property type="entry name" value="EFG_C"/>
    <property type="match status" value="1"/>
</dbReference>
<dbReference type="SUPFAM" id="SSF54980">
    <property type="entry name" value="EF-G C-terminal domain-like"/>
    <property type="match status" value="2"/>
</dbReference>
<dbReference type="SUPFAM" id="SSF52540">
    <property type="entry name" value="P-loop containing nucleoside triphosphate hydrolases"/>
    <property type="match status" value="1"/>
</dbReference>
<dbReference type="SUPFAM" id="SSF54211">
    <property type="entry name" value="Ribosomal protein S5 domain 2-like"/>
    <property type="match status" value="1"/>
</dbReference>
<dbReference type="SUPFAM" id="SSF50447">
    <property type="entry name" value="Translation proteins"/>
    <property type="match status" value="1"/>
</dbReference>
<dbReference type="PROSITE" id="PS00301">
    <property type="entry name" value="G_TR_1"/>
    <property type="match status" value="1"/>
</dbReference>
<dbReference type="PROSITE" id="PS51722">
    <property type="entry name" value="G_TR_2"/>
    <property type="match status" value="1"/>
</dbReference>
<comment type="function">
    <text evidence="2">Mitochondrial GTPase that mediates the disassembly of ribosomes from messenger RNA at the termination of mitochondrial protein biosynthesis. Not involved in the GTP-dependent ribosomal translocation step during translation elongation.</text>
</comment>
<comment type="subcellular location">
    <subcellularLocation>
        <location evidence="2">Mitochondrion</location>
    </subcellularLocation>
</comment>
<comment type="similarity">
    <text evidence="2">Belongs to the TRAFAC class translation factor GTPase superfamily. Classic translation factor GTPase family. EF-G/EF-2 subfamily.</text>
</comment>
<feature type="transit peptide" description="Mitochondrion" evidence="2">
    <location>
        <begin position="1"/>
        <end position="28"/>
    </location>
</feature>
<feature type="chain" id="PRO_0000385605" description="Ribosome-releasing factor 2, mitochondrial">
    <location>
        <begin position="29"/>
        <end position="712"/>
    </location>
</feature>
<feature type="domain" description="tr-type G">
    <location>
        <begin position="30"/>
        <end position="309"/>
    </location>
</feature>
<feature type="binding site" evidence="2">
    <location>
        <begin position="39"/>
        <end position="46"/>
    </location>
    <ligand>
        <name>GTP</name>
        <dbReference type="ChEBI" id="CHEBI:37565"/>
    </ligand>
</feature>
<feature type="binding site" evidence="2">
    <location>
        <begin position="103"/>
        <end position="107"/>
    </location>
    <ligand>
        <name>GTP</name>
        <dbReference type="ChEBI" id="CHEBI:37565"/>
    </ligand>
</feature>
<feature type="binding site" evidence="2">
    <location>
        <begin position="157"/>
        <end position="160"/>
    </location>
    <ligand>
        <name>GTP</name>
        <dbReference type="ChEBI" id="CHEBI:37565"/>
    </ligand>
</feature>
<accession>B4M416</accession>
<sequence>MQYSLLSAQLRCSRFLLRQQAPFINRCYSDDIRNIGILAHIDAGKTTTTERMLYYAGKTRSLGEVHRGNTVTDYLTQERERGITICSSAVTFAWNGKRINLLDTPGHIDFTMEVEQSLYAVDGVIVVLDGTAGVEAQTVTVWTQADNHRLPRLVFVNKMDRSDAIFDKCIDDLKAKLDAKPICTQLPAKNVDGQLGIYDVITLEQLTWQQNDFGRTYSINKLESSSEIRELREKRNELIDQLSGVDDELAEVVISTESFDKVSNELIVQALRRATCQQKVVPVLLGSAYKNIGIQRVMDAVNAYLPTPNERNQIYNCFGGELKRGMRVLSSRGQAEVISKIYEPLADEYREVSSVRAGDVAICAGLKSTVTGDLLTTSHTSLKNAQKRLIQSLDATSPQYDEDEVDVNQELFSIEPKIPDAVYFCSIEPPSLSTQTAMEQALKQLQREDPSLRVNYDTVTGQTVLGGMGELHMEIIKSRLLSEYKIDVDLGPLQIAYKEAIETPAITTLSVEKDIAGSKQNVNITLQLTNNQTELFSLDKSPENVQNLNALRPRVLQVLRKGAIGALERGPRVGGQVVDTQIRLHNVTVGRGTADSFVMAAAAQCVQKLLSKSGTRLLEPIMAMQIVAPNERVSGIIADLSRRRALIKDVMPKGDRNKLILVNAPLAELSGYSSALRTISSGTASMTMQPCGFSEMNAADETLAVRRAQGLD</sequence>
<reference key="1">
    <citation type="journal article" date="2007" name="Nature">
        <title>Evolution of genes and genomes on the Drosophila phylogeny.</title>
        <authorList>
            <consortium name="Drosophila 12 genomes consortium"/>
        </authorList>
    </citation>
    <scope>NUCLEOTIDE SEQUENCE [LARGE SCALE GENOMIC DNA]</scope>
    <source>
        <strain>Tucson 15010-1051.87</strain>
    </source>
</reference>
<gene>
    <name evidence="1" type="primary">mRRF2</name>
    <name evidence="1" type="synonym">EF-G2</name>
    <name type="ORF">GJ10848</name>
</gene>
<organism>
    <name type="scientific">Drosophila virilis</name>
    <name type="common">Fruit fly</name>
    <dbReference type="NCBI Taxonomy" id="7244"/>
    <lineage>
        <taxon>Eukaryota</taxon>
        <taxon>Metazoa</taxon>
        <taxon>Ecdysozoa</taxon>
        <taxon>Arthropoda</taxon>
        <taxon>Hexapoda</taxon>
        <taxon>Insecta</taxon>
        <taxon>Pterygota</taxon>
        <taxon>Neoptera</taxon>
        <taxon>Endopterygota</taxon>
        <taxon>Diptera</taxon>
        <taxon>Brachycera</taxon>
        <taxon>Muscomorpha</taxon>
        <taxon>Ephydroidea</taxon>
        <taxon>Drosophilidae</taxon>
        <taxon>Drosophila</taxon>
    </lineage>
</organism>